<dbReference type="EC" id="2.1.1.170" evidence="1"/>
<dbReference type="EMBL" id="AM421808">
    <property type="protein sequence ID" value="CAM09500.1"/>
    <property type="molecule type" value="Genomic_DNA"/>
</dbReference>
<dbReference type="RefSeq" id="WP_002239441.1">
    <property type="nucleotide sequence ID" value="NC_008767.1"/>
</dbReference>
<dbReference type="SMR" id="A1KRM2"/>
<dbReference type="KEGG" id="nmc:NMC0181"/>
<dbReference type="HOGENOM" id="CLU_065341_2_0_4"/>
<dbReference type="Proteomes" id="UP000002286">
    <property type="component" value="Chromosome"/>
</dbReference>
<dbReference type="GO" id="GO:0005829">
    <property type="term" value="C:cytosol"/>
    <property type="evidence" value="ECO:0007669"/>
    <property type="project" value="TreeGrafter"/>
</dbReference>
<dbReference type="GO" id="GO:0070043">
    <property type="term" value="F:rRNA (guanine-N7-)-methyltransferase activity"/>
    <property type="evidence" value="ECO:0007669"/>
    <property type="project" value="UniProtKB-UniRule"/>
</dbReference>
<dbReference type="CDD" id="cd02440">
    <property type="entry name" value="AdoMet_MTases"/>
    <property type="match status" value="1"/>
</dbReference>
<dbReference type="FunFam" id="3.40.50.150:FF:000353">
    <property type="entry name" value="Ribosomal RNA small subunit methyltransferase G"/>
    <property type="match status" value="1"/>
</dbReference>
<dbReference type="Gene3D" id="3.40.50.150">
    <property type="entry name" value="Vaccinia Virus protein VP39"/>
    <property type="match status" value="1"/>
</dbReference>
<dbReference type="HAMAP" id="MF_00074">
    <property type="entry name" value="16SrRNA_methyltr_G"/>
    <property type="match status" value="1"/>
</dbReference>
<dbReference type="InterPro" id="IPR003682">
    <property type="entry name" value="rRNA_ssu_MeTfrase_G"/>
</dbReference>
<dbReference type="InterPro" id="IPR029063">
    <property type="entry name" value="SAM-dependent_MTases_sf"/>
</dbReference>
<dbReference type="NCBIfam" id="TIGR00138">
    <property type="entry name" value="rsmG_gidB"/>
    <property type="match status" value="1"/>
</dbReference>
<dbReference type="PANTHER" id="PTHR31760">
    <property type="entry name" value="S-ADENOSYL-L-METHIONINE-DEPENDENT METHYLTRANSFERASES SUPERFAMILY PROTEIN"/>
    <property type="match status" value="1"/>
</dbReference>
<dbReference type="PANTHER" id="PTHR31760:SF0">
    <property type="entry name" value="S-ADENOSYL-L-METHIONINE-DEPENDENT METHYLTRANSFERASES SUPERFAMILY PROTEIN"/>
    <property type="match status" value="1"/>
</dbReference>
<dbReference type="Pfam" id="PF02527">
    <property type="entry name" value="GidB"/>
    <property type="match status" value="1"/>
</dbReference>
<dbReference type="PIRSF" id="PIRSF003078">
    <property type="entry name" value="GidB"/>
    <property type="match status" value="1"/>
</dbReference>
<dbReference type="SUPFAM" id="SSF53335">
    <property type="entry name" value="S-adenosyl-L-methionine-dependent methyltransferases"/>
    <property type="match status" value="1"/>
</dbReference>
<proteinExistence type="inferred from homology"/>
<sequence>MERKERLRAGIAAMGLDISETAQDRLLAYVDLLKKWNKTYNLTALRDEEKMIVHHLLDSLTLLPHIEGVQTMLDVGSGGGQPGIPAAVCRPDVQITLLDANTKKTAFLQQAVIELGLDNVRVVSGRVEAVSDVRADVVTSRAFAELADFVSWTGHLLKDGGYWAAMKGVYPQGEIGRLPQDVCVEKVQRLDVPGLDAERHIVILSKR</sequence>
<organism>
    <name type="scientific">Neisseria meningitidis serogroup C / serotype 2a (strain ATCC 700532 / DSM 15464 / FAM18)</name>
    <dbReference type="NCBI Taxonomy" id="272831"/>
    <lineage>
        <taxon>Bacteria</taxon>
        <taxon>Pseudomonadati</taxon>
        <taxon>Pseudomonadota</taxon>
        <taxon>Betaproteobacteria</taxon>
        <taxon>Neisseriales</taxon>
        <taxon>Neisseriaceae</taxon>
        <taxon>Neisseria</taxon>
    </lineage>
</organism>
<reference key="1">
    <citation type="journal article" date="2007" name="PLoS Genet.">
        <title>Meningococcal genetic variation mechanisms viewed through comparative analysis of serogroup C strain FAM18.</title>
        <authorList>
            <person name="Bentley S.D."/>
            <person name="Vernikos G.S."/>
            <person name="Snyder L.A.S."/>
            <person name="Churcher C."/>
            <person name="Arrowsmith C."/>
            <person name="Chillingworth T."/>
            <person name="Cronin A."/>
            <person name="Davis P.H."/>
            <person name="Holroyd N.E."/>
            <person name="Jagels K."/>
            <person name="Maddison M."/>
            <person name="Moule S."/>
            <person name="Rabbinowitsch E."/>
            <person name="Sharp S."/>
            <person name="Unwin L."/>
            <person name="Whitehead S."/>
            <person name="Quail M.A."/>
            <person name="Achtman M."/>
            <person name="Barrell B.G."/>
            <person name="Saunders N.J."/>
            <person name="Parkhill J."/>
        </authorList>
    </citation>
    <scope>NUCLEOTIDE SEQUENCE [LARGE SCALE GENOMIC DNA]</scope>
    <source>
        <strain>ATCC 700532 / DSM 15464 / FAM18</strain>
    </source>
</reference>
<evidence type="ECO:0000255" key="1">
    <source>
        <dbReference type="HAMAP-Rule" id="MF_00074"/>
    </source>
</evidence>
<comment type="function">
    <text evidence="1">Specifically methylates the N7 position of guanine in position 527 of 16S rRNA.</text>
</comment>
<comment type="catalytic activity">
    <reaction evidence="1">
        <text>guanosine(527) in 16S rRNA + S-adenosyl-L-methionine = N(7)-methylguanosine(527) in 16S rRNA + S-adenosyl-L-homocysteine</text>
        <dbReference type="Rhea" id="RHEA:42732"/>
        <dbReference type="Rhea" id="RHEA-COMP:10209"/>
        <dbReference type="Rhea" id="RHEA-COMP:10210"/>
        <dbReference type="ChEBI" id="CHEBI:57856"/>
        <dbReference type="ChEBI" id="CHEBI:59789"/>
        <dbReference type="ChEBI" id="CHEBI:74269"/>
        <dbReference type="ChEBI" id="CHEBI:74480"/>
        <dbReference type="EC" id="2.1.1.170"/>
    </reaction>
</comment>
<comment type="subcellular location">
    <subcellularLocation>
        <location evidence="1">Cytoplasm</location>
    </subcellularLocation>
</comment>
<comment type="similarity">
    <text evidence="1">Belongs to the methyltransferase superfamily. RNA methyltransferase RsmG family.</text>
</comment>
<protein>
    <recommendedName>
        <fullName evidence="1">Ribosomal RNA small subunit methyltransferase G</fullName>
        <ecNumber evidence="1">2.1.1.170</ecNumber>
    </recommendedName>
    <alternativeName>
        <fullName evidence="1">16S rRNA 7-methylguanosine methyltransferase</fullName>
        <shortName evidence="1">16S rRNA m7G methyltransferase</shortName>
    </alternativeName>
</protein>
<feature type="chain" id="PRO_1000010172" description="Ribosomal RNA small subunit methyltransferase G">
    <location>
        <begin position="1"/>
        <end position="207"/>
    </location>
</feature>
<feature type="binding site" evidence="1">
    <location>
        <position position="76"/>
    </location>
    <ligand>
        <name>S-adenosyl-L-methionine</name>
        <dbReference type="ChEBI" id="CHEBI:59789"/>
    </ligand>
</feature>
<feature type="binding site" evidence="1">
    <location>
        <position position="81"/>
    </location>
    <ligand>
        <name>S-adenosyl-L-methionine</name>
        <dbReference type="ChEBI" id="CHEBI:59789"/>
    </ligand>
</feature>
<feature type="binding site" evidence="1">
    <location>
        <begin position="127"/>
        <end position="128"/>
    </location>
    <ligand>
        <name>S-adenosyl-L-methionine</name>
        <dbReference type="ChEBI" id="CHEBI:59789"/>
    </ligand>
</feature>
<feature type="binding site" evidence="1">
    <location>
        <position position="141"/>
    </location>
    <ligand>
        <name>S-adenosyl-L-methionine</name>
        <dbReference type="ChEBI" id="CHEBI:59789"/>
    </ligand>
</feature>
<accession>A1KRM2</accession>
<keyword id="KW-0963">Cytoplasm</keyword>
<keyword id="KW-0489">Methyltransferase</keyword>
<keyword id="KW-0698">rRNA processing</keyword>
<keyword id="KW-0949">S-adenosyl-L-methionine</keyword>
<keyword id="KW-0808">Transferase</keyword>
<gene>
    <name evidence="1" type="primary">rsmG</name>
    <name type="ordered locus">NMC0181</name>
</gene>
<name>RSMG_NEIMF</name>